<organism>
    <name type="scientific">Deinococcus deserti (strain DSM 17065 / CIP 109153 / LMG 22923 / VCD115)</name>
    <dbReference type="NCBI Taxonomy" id="546414"/>
    <lineage>
        <taxon>Bacteria</taxon>
        <taxon>Thermotogati</taxon>
        <taxon>Deinococcota</taxon>
        <taxon>Deinococci</taxon>
        <taxon>Deinococcales</taxon>
        <taxon>Deinococcaceae</taxon>
        <taxon>Deinococcus</taxon>
    </lineage>
</organism>
<dbReference type="EC" id="3.1.1.29" evidence="1"/>
<dbReference type="EMBL" id="CP001114">
    <property type="protein sequence ID" value="ACO44888.1"/>
    <property type="molecule type" value="Genomic_DNA"/>
</dbReference>
<dbReference type="RefSeq" id="WP_012692011.1">
    <property type="nucleotide sequence ID" value="NC_012526.1"/>
</dbReference>
<dbReference type="SMR" id="C1CXT2"/>
<dbReference type="STRING" id="546414.Deide_00880"/>
<dbReference type="PaxDb" id="546414-Deide_00880"/>
<dbReference type="KEGG" id="ddr:Deide_00880"/>
<dbReference type="eggNOG" id="COG0193">
    <property type="taxonomic scope" value="Bacteria"/>
</dbReference>
<dbReference type="HOGENOM" id="CLU_062456_4_1_0"/>
<dbReference type="OrthoDB" id="9800507at2"/>
<dbReference type="Proteomes" id="UP000002208">
    <property type="component" value="Chromosome"/>
</dbReference>
<dbReference type="GO" id="GO:0005737">
    <property type="term" value="C:cytoplasm"/>
    <property type="evidence" value="ECO:0007669"/>
    <property type="project" value="UniProtKB-SubCell"/>
</dbReference>
<dbReference type="GO" id="GO:0004045">
    <property type="term" value="F:peptidyl-tRNA hydrolase activity"/>
    <property type="evidence" value="ECO:0007669"/>
    <property type="project" value="UniProtKB-UniRule"/>
</dbReference>
<dbReference type="GO" id="GO:0000049">
    <property type="term" value="F:tRNA binding"/>
    <property type="evidence" value="ECO:0007669"/>
    <property type="project" value="UniProtKB-UniRule"/>
</dbReference>
<dbReference type="GO" id="GO:0006515">
    <property type="term" value="P:protein quality control for misfolded or incompletely synthesized proteins"/>
    <property type="evidence" value="ECO:0007669"/>
    <property type="project" value="UniProtKB-UniRule"/>
</dbReference>
<dbReference type="GO" id="GO:0072344">
    <property type="term" value="P:rescue of stalled ribosome"/>
    <property type="evidence" value="ECO:0007669"/>
    <property type="project" value="UniProtKB-UniRule"/>
</dbReference>
<dbReference type="CDD" id="cd00462">
    <property type="entry name" value="PTH"/>
    <property type="match status" value="1"/>
</dbReference>
<dbReference type="FunFam" id="3.40.50.1470:FF:000001">
    <property type="entry name" value="Peptidyl-tRNA hydrolase"/>
    <property type="match status" value="1"/>
</dbReference>
<dbReference type="Gene3D" id="3.40.50.1470">
    <property type="entry name" value="Peptidyl-tRNA hydrolase"/>
    <property type="match status" value="1"/>
</dbReference>
<dbReference type="HAMAP" id="MF_00083">
    <property type="entry name" value="Pept_tRNA_hydro_bact"/>
    <property type="match status" value="1"/>
</dbReference>
<dbReference type="InterPro" id="IPR001328">
    <property type="entry name" value="Pept_tRNA_hydro"/>
</dbReference>
<dbReference type="InterPro" id="IPR018171">
    <property type="entry name" value="Pept_tRNA_hydro_CS"/>
</dbReference>
<dbReference type="InterPro" id="IPR036416">
    <property type="entry name" value="Pept_tRNA_hydro_sf"/>
</dbReference>
<dbReference type="NCBIfam" id="TIGR00447">
    <property type="entry name" value="pth"/>
    <property type="match status" value="1"/>
</dbReference>
<dbReference type="PANTHER" id="PTHR17224">
    <property type="entry name" value="PEPTIDYL-TRNA HYDROLASE"/>
    <property type="match status" value="1"/>
</dbReference>
<dbReference type="PANTHER" id="PTHR17224:SF1">
    <property type="entry name" value="PEPTIDYL-TRNA HYDROLASE"/>
    <property type="match status" value="1"/>
</dbReference>
<dbReference type="Pfam" id="PF01195">
    <property type="entry name" value="Pept_tRNA_hydro"/>
    <property type="match status" value="1"/>
</dbReference>
<dbReference type="SUPFAM" id="SSF53178">
    <property type="entry name" value="Peptidyl-tRNA hydrolase-like"/>
    <property type="match status" value="1"/>
</dbReference>
<dbReference type="PROSITE" id="PS01195">
    <property type="entry name" value="PEPT_TRNA_HYDROL_1"/>
    <property type="match status" value="1"/>
</dbReference>
<evidence type="ECO:0000255" key="1">
    <source>
        <dbReference type="HAMAP-Rule" id="MF_00083"/>
    </source>
</evidence>
<evidence type="ECO:0000256" key="2">
    <source>
        <dbReference type="SAM" id="MobiDB-lite"/>
    </source>
</evidence>
<sequence length="220" mass="23902">MKLVVGLGNPGTQYAQTRHNVGWLVVNEVARRWGATWRKEKDAEVAEIRLGPAPGVKVLLVKPQTFMNASGKAVVPRLSFFKLDPGALLVVQDDLDSPFGLMKVRLGGRHGGQNGVRDIIRLLGTEAFARLKLGISRPPAGRDPADWVLSRWRDEEQSTLGDLVRLGADAVERWATAGLAEAQQAFNSTDLRPRPEPVPAPQPADVSGPQETGPAERPEV</sequence>
<comment type="function">
    <text evidence="1">Hydrolyzes ribosome-free peptidyl-tRNAs (with 1 or more amino acids incorporated), which drop off the ribosome during protein synthesis, or as a result of ribosome stalling.</text>
</comment>
<comment type="function">
    <text evidence="1">Catalyzes the release of premature peptidyl moieties from peptidyl-tRNA molecules trapped in stalled 50S ribosomal subunits, and thus maintains levels of free tRNAs and 50S ribosomes.</text>
</comment>
<comment type="catalytic activity">
    <reaction evidence="1">
        <text>an N-acyl-L-alpha-aminoacyl-tRNA + H2O = an N-acyl-L-amino acid + a tRNA + H(+)</text>
        <dbReference type="Rhea" id="RHEA:54448"/>
        <dbReference type="Rhea" id="RHEA-COMP:10123"/>
        <dbReference type="Rhea" id="RHEA-COMP:13883"/>
        <dbReference type="ChEBI" id="CHEBI:15377"/>
        <dbReference type="ChEBI" id="CHEBI:15378"/>
        <dbReference type="ChEBI" id="CHEBI:59874"/>
        <dbReference type="ChEBI" id="CHEBI:78442"/>
        <dbReference type="ChEBI" id="CHEBI:138191"/>
        <dbReference type="EC" id="3.1.1.29"/>
    </reaction>
</comment>
<comment type="subunit">
    <text evidence="1">Monomer.</text>
</comment>
<comment type="subcellular location">
    <subcellularLocation>
        <location evidence="1">Cytoplasm</location>
    </subcellularLocation>
</comment>
<comment type="similarity">
    <text evidence="1">Belongs to the PTH family.</text>
</comment>
<name>PTH_DEIDV</name>
<protein>
    <recommendedName>
        <fullName evidence="1">Peptidyl-tRNA hydrolase</fullName>
        <shortName evidence="1">Pth</shortName>
        <ecNumber evidence="1">3.1.1.29</ecNumber>
    </recommendedName>
</protein>
<reference key="1">
    <citation type="journal article" date="2009" name="PLoS Genet.">
        <title>Alliance of proteomics and genomics to unravel the specificities of Sahara bacterium Deinococcus deserti.</title>
        <authorList>
            <person name="de Groot A."/>
            <person name="Dulermo R."/>
            <person name="Ortet P."/>
            <person name="Blanchard L."/>
            <person name="Guerin P."/>
            <person name="Fernandez B."/>
            <person name="Vacherie B."/>
            <person name="Dossat C."/>
            <person name="Jolivet E."/>
            <person name="Siguier P."/>
            <person name="Chandler M."/>
            <person name="Barakat M."/>
            <person name="Dedieu A."/>
            <person name="Barbe V."/>
            <person name="Heulin T."/>
            <person name="Sommer S."/>
            <person name="Achouak W."/>
            <person name="Armengaud J."/>
        </authorList>
    </citation>
    <scope>NUCLEOTIDE SEQUENCE [LARGE SCALE GENOMIC DNA]</scope>
    <source>
        <strain>DSM 17065 / CIP 109153 / LMG 22923 / VCD115</strain>
    </source>
</reference>
<accession>C1CXT2</accession>
<gene>
    <name evidence="1" type="primary">pth</name>
    <name type="ordered locus">Deide_00880</name>
</gene>
<keyword id="KW-0963">Cytoplasm</keyword>
<keyword id="KW-0378">Hydrolase</keyword>
<keyword id="KW-1185">Reference proteome</keyword>
<keyword id="KW-0694">RNA-binding</keyword>
<keyword id="KW-0820">tRNA-binding</keyword>
<proteinExistence type="inferred from homology"/>
<feature type="chain" id="PRO_1000202577" description="Peptidyl-tRNA hydrolase">
    <location>
        <begin position="1"/>
        <end position="220"/>
    </location>
</feature>
<feature type="region of interest" description="Disordered" evidence="2">
    <location>
        <begin position="184"/>
        <end position="220"/>
    </location>
</feature>
<feature type="active site" description="Proton acceptor" evidence="1">
    <location>
        <position position="19"/>
    </location>
</feature>
<feature type="binding site" evidence="1">
    <location>
        <position position="14"/>
    </location>
    <ligand>
        <name>tRNA</name>
        <dbReference type="ChEBI" id="CHEBI:17843"/>
    </ligand>
</feature>
<feature type="binding site" evidence="1">
    <location>
        <position position="66"/>
    </location>
    <ligand>
        <name>tRNA</name>
        <dbReference type="ChEBI" id="CHEBI:17843"/>
    </ligand>
</feature>
<feature type="binding site" evidence="1">
    <location>
        <position position="68"/>
    </location>
    <ligand>
        <name>tRNA</name>
        <dbReference type="ChEBI" id="CHEBI:17843"/>
    </ligand>
</feature>
<feature type="binding site" evidence="1">
    <location>
        <position position="114"/>
    </location>
    <ligand>
        <name>tRNA</name>
        <dbReference type="ChEBI" id="CHEBI:17843"/>
    </ligand>
</feature>
<feature type="site" description="Discriminates between blocked and unblocked aminoacyl-tRNA" evidence="1">
    <location>
        <position position="9"/>
    </location>
</feature>
<feature type="site" description="Stabilizes the basic form of H active site to accept a proton" evidence="1">
    <location>
        <position position="93"/>
    </location>
</feature>